<evidence type="ECO:0000255" key="1">
    <source>
        <dbReference type="HAMAP-Rule" id="MF_01643"/>
    </source>
</evidence>
<feature type="chain" id="PRO_0000319245" description="Formate-dependent phosphoribosylglycinamide formyltransferase">
    <location>
        <begin position="1"/>
        <end position="391"/>
    </location>
</feature>
<feature type="domain" description="ATP-grasp" evidence="1">
    <location>
        <begin position="115"/>
        <end position="305"/>
    </location>
</feature>
<feature type="binding site" evidence="1">
    <location>
        <begin position="18"/>
        <end position="19"/>
    </location>
    <ligand>
        <name>N(1)-(5-phospho-beta-D-ribosyl)glycinamide</name>
        <dbReference type="ChEBI" id="CHEBI:143788"/>
    </ligand>
</feature>
<feature type="binding site" evidence="1">
    <location>
        <position position="78"/>
    </location>
    <ligand>
        <name>N(1)-(5-phospho-beta-D-ribosyl)glycinamide</name>
        <dbReference type="ChEBI" id="CHEBI:143788"/>
    </ligand>
</feature>
<feature type="binding site" evidence="1">
    <location>
        <position position="110"/>
    </location>
    <ligand>
        <name>ATP</name>
        <dbReference type="ChEBI" id="CHEBI:30616"/>
    </ligand>
</feature>
<feature type="binding site" evidence="1">
    <location>
        <position position="151"/>
    </location>
    <ligand>
        <name>ATP</name>
        <dbReference type="ChEBI" id="CHEBI:30616"/>
    </ligand>
</feature>
<feature type="binding site" evidence="1">
    <location>
        <begin position="156"/>
        <end position="161"/>
    </location>
    <ligand>
        <name>ATP</name>
        <dbReference type="ChEBI" id="CHEBI:30616"/>
    </ligand>
</feature>
<feature type="binding site" evidence="1">
    <location>
        <begin position="191"/>
        <end position="194"/>
    </location>
    <ligand>
        <name>ATP</name>
        <dbReference type="ChEBI" id="CHEBI:30616"/>
    </ligand>
</feature>
<feature type="binding site" evidence="1">
    <location>
        <position position="199"/>
    </location>
    <ligand>
        <name>ATP</name>
        <dbReference type="ChEBI" id="CHEBI:30616"/>
    </ligand>
</feature>
<feature type="binding site" evidence="1">
    <location>
        <position position="264"/>
    </location>
    <ligand>
        <name>Mg(2+)</name>
        <dbReference type="ChEBI" id="CHEBI:18420"/>
    </ligand>
</feature>
<feature type="binding site" evidence="1">
    <location>
        <position position="276"/>
    </location>
    <ligand>
        <name>Mg(2+)</name>
        <dbReference type="ChEBI" id="CHEBI:18420"/>
    </ligand>
</feature>
<feature type="binding site" evidence="1">
    <location>
        <position position="283"/>
    </location>
    <ligand>
        <name>N(1)-(5-phospho-beta-D-ribosyl)glycinamide</name>
        <dbReference type="ChEBI" id="CHEBI:143788"/>
    </ligand>
</feature>
<feature type="binding site" evidence="1">
    <location>
        <position position="353"/>
    </location>
    <ligand>
        <name>N(1)-(5-phospho-beta-D-ribosyl)glycinamide</name>
        <dbReference type="ChEBI" id="CHEBI:143788"/>
    </ligand>
</feature>
<feature type="binding site" evidence="1">
    <location>
        <begin position="360"/>
        <end position="361"/>
    </location>
    <ligand>
        <name>N(1)-(5-phospho-beta-D-ribosyl)glycinamide</name>
        <dbReference type="ChEBI" id="CHEBI:143788"/>
    </ligand>
</feature>
<comment type="function">
    <text evidence="1">Involved in the de novo purine biosynthesis. Catalyzes the transfer of formate to 5-phospho-ribosyl-glycinamide (GAR), producing 5-phospho-ribosyl-N-formylglycinamide (FGAR). Formate is provided by PurU via hydrolysis of 10-formyl-tetrahydrofolate.</text>
</comment>
<comment type="catalytic activity">
    <reaction evidence="1">
        <text>N(1)-(5-phospho-beta-D-ribosyl)glycinamide + formate + ATP = N(2)-formyl-N(1)-(5-phospho-beta-D-ribosyl)glycinamide + ADP + phosphate + H(+)</text>
        <dbReference type="Rhea" id="RHEA:24829"/>
        <dbReference type="ChEBI" id="CHEBI:15378"/>
        <dbReference type="ChEBI" id="CHEBI:15740"/>
        <dbReference type="ChEBI" id="CHEBI:30616"/>
        <dbReference type="ChEBI" id="CHEBI:43474"/>
        <dbReference type="ChEBI" id="CHEBI:143788"/>
        <dbReference type="ChEBI" id="CHEBI:147286"/>
        <dbReference type="ChEBI" id="CHEBI:456216"/>
        <dbReference type="EC" id="6.3.1.21"/>
    </reaction>
    <physiologicalReaction direction="left-to-right" evidence="1">
        <dbReference type="Rhea" id="RHEA:24830"/>
    </physiologicalReaction>
</comment>
<comment type="pathway">
    <text evidence="1">Purine metabolism; IMP biosynthesis via de novo pathway; N(2)-formyl-N(1)-(5-phospho-D-ribosyl)glycinamide from N(1)-(5-phospho-D-ribosyl)glycinamide (formate route): step 1/1.</text>
</comment>
<comment type="subunit">
    <text evidence="1">Homodimer.</text>
</comment>
<comment type="similarity">
    <text evidence="1">Belongs to the PurK/PurT family.</text>
</comment>
<protein>
    <recommendedName>
        <fullName evidence="1">Formate-dependent phosphoribosylglycinamide formyltransferase</fullName>
        <ecNumber evidence="1">6.3.1.21</ecNumber>
    </recommendedName>
    <alternativeName>
        <fullName evidence="1">5'-phosphoribosylglycinamide transformylase 2</fullName>
    </alternativeName>
    <alternativeName>
        <fullName evidence="1">Formate-dependent GAR transformylase</fullName>
    </alternativeName>
    <alternativeName>
        <fullName evidence="1">GAR transformylase 2</fullName>
        <shortName evidence="1">GART 2</shortName>
    </alternativeName>
    <alternativeName>
        <fullName evidence="1">Non-folate glycinamide ribonucleotide transformylase</fullName>
    </alternativeName>
    <alternativeName>
        <fullName evidence="1">Phosphoribosylglycinamide formyltransferase 2</fullName>
    </alternativeName>
</protein>
<dbReference type="EC" id="6.3.1.21" evidence="1"/>
<dbReference type="EMBL" id="AP008231">
    <property type="protein sequence ID" value="BAD79125.1"/>
    <property type="molecule type" value="Genomic_DNA"/>
</dbReference>
<dbReference type="RefSeq" id="WP_011243247.1">
    <property type="nucleotide sequence ID" value="NZ_CP085785.1"/>
</dbReference>
<dbReference type="SMR" id="Q5N3J5"/>
<dbReference type="GeneID" id="72429419"/>
<dbReference type="KEGG" id="syc:syc0935_d"/>
<dbReference type="eggNOG" id="COG0027">
    <property type="taxonomic scope" value="Bacteria"/>
</dbReference>
<dbReference type="UniPathway" id="UPA00074">
    <property type="reaction ID" value="UER00127"/>
</dbReference>
<dbReference type="Proteomes" id="UP000001175">
    <property type="component" value="Chromosome"/>
</dbReference>
<dbReference type="GO" id="GO:0005829">
    <property type="term" value="C:cytosol"/>
    <property type="evidence" value="ECO:0007669"/>
    <property type="project" value="TreeGrafter"/>
</dbReference>
<dbReference type="GO" id="GO:0005524">
    <property type="term" value="F:ATP binding"/>
    <property type="evidence" value="ECO:0007669"/>
    <property type="project" value="UniProtKB-UniRule"/>
</dbReference>
<dbReference type="GO" id="GO:0000287">
    <property type="term" value="F:magnesium ion binding"/>
    <property type="evidence" value="ECO:0007669"/>
    <property type="project" value="InterPro"/>
</dbReference>
<dbReference type="GO" id="GO:0043815">
    <property type="term" value="F:phosphoribosylglycinamide formyltransferase 2 activity"/>
    <property type="evidence" value="ECO:0007669"/>
    <property type="project" value="UniProtKB-UniRule"/>
</dbReference>
<dbReference type="GO" id="GO:0004644">
    <property type="term" value="F:phosphoribosylglycinamide formyltransferase activity"/>
    <property type="evidence" value="ECO:0007669"/>
    <property type="project" value="InterPro"/>
</dbReference>
<dbReference type="GO" id="GO:0006189">
    <property type="term" value="P:'de novo' IMP biosynthetic process"/>
    <property type="evidence" value="ECO:0007669"/>
    <property type="project" value="UniProtKB-UniRule"/>
</dbReference>
<dbReference type="FunFam" id="3.40.50.20:FF:000022">
    <property type="entry name" value="Formate-dependent phosphoribosylglycinamide formyltransferase"/>
    <property type="match status" value="1"/>
</dbReference>
<dbReference type="Gene3D" id="3.40.50.20">
    <property type="match status" value="1"/>
</dbReference>
<dbReference type="Gene3D" id="3.30.1490.20">
    <property type="entry name" value="ATP-grasp fold, A domain"/>
    <property type="match status" value="1"/>
</dbReference>
<dbReference type="Gene3D" id="3.30.470.20">
    <property type="entry name" value="ATP-grasp fold, B domain"/>
    <property type="match status" value="1"/>
</dbReference>
<dbReference type="HAMAP" id="MF_01643">
    <property type="entry name" value="PurT"/>
    <property type="match status" value="1"/>
</dbReference>
<dbReference type="InterPro" id="IPR011761">
    <property type="entry name" value="ATP-grasp"/>
</dbReference>
<dbReference type="InterPro" id="IPR003135">
    <property type="entry name" value="ATP-grasp_carboxylate-amine"/>
</dbReference>
<dbReference type="InterPro" id="IPR013815">
    <property type="entry name" value="ATP_grasp_subdomain_1"/>
</dbReference>
<dbReference type="InterPro" id="IPR016185">
    <property type="entry name" value="PreATP-grasp_dom_sf"/>
</dbReference>
<dbReference type="InterPro" id="IPR005862">
    <property type="entry name" value="PurT"/>
</dbReference>
<dbReference type="InterPro" id="IPR054350">
    <property type="entry name" value="PurT/PurK_preATP-grasp"/>
</dbReference>
<dbReference type="InterPro" id="IPR048740">
    <property type="entry name" value="PurT_C"/>
</dbReference>
<dbReference type="InterPro" id="IPR011054">
    <property type="entry name" value="Rudment_hybrid_motif"/>
</dbReference>
<dbReference type="NCBIfam" id="NF006766">
    <property type="entry name" value="PRK09288.1"/>
    <property type="match status" value="1"/>
</dbReference>
<dbReference type="NCBIfam" id="TIGR01142">
    <property type="entry name" value="purT"/>
    <property type="match status" value="1"/>
</dbReference>
<dbReference type="PANTHER" id="PTHR43055">
    <property type="entry name" value="FORMATE-DEPENDENT PHOSPHORIBOSYLGLYCINAMIDE FORMYLTRANSFERASE"/>
    <property type="match status" value="1"/>
</dbReference>
<dbReference type="PANTHER" id="PTHR43055:SF1">
    <property type="entry name" value="FORMATE-DEPENDENT PHOSPHORIBOSYLGLYCINAMIDE FORMYLTRANSFERASE"/>
    <property type="match status" value="1"/>
</dbReference>
<dbReference type="Pfam" id="PF02222">
    <property type="entry name" value="ATP-grasp"/>
    <property type="match status" value="1"/>
</dbReference>
<dbReference type="Pfam" id="PF21244">
    <property type="entry name" value="PurT_C"/>
    <property type="match status" value="1"/>
</dbReference>
<dbReference type="Pfam" id="PF22660">
    <property type="entry name" value="RS_preATP-grasp-like"/>
    <property type="match status" value="1"/>
</dbReference>
<dbReference type="SUPFAM" id="SSF56059">
    <property type="entry name" value="Glutathione synthetase ATP-binding domain-like"/>
    <property type="match status" value="1"/>
</dbReference>
<dbReference type="SUPFAM" id="SSF52440">
    <property type="entry name" value="PreATP-grasp domain"/>
    <property type="match status" value="1"/>
</dbReference>
<dbReference type="SUPFAM" id="SSF51246">
    <property type="entry name" value="Rudiment single hybrid motif"/>
    <property type="match status" value="1"/>
</dbReference>
<dbReference type="PROSITE" id="PS50975">
    <property type="entry name" value="ATP_GRASP"/>
    <property type="match status" value="1"/>
</dbReference>
<proteinExistence type="inferred from homology"/>
<name>PURT_SYNP6</name>
<keyword id="KW-0067">ATP-binding</keyword>
<keyword id="KW-0436">Ligase</keyword>
<keyword id="KW-0460">Magnesium</keyword>
<keyword id="KW-0479">Metal-binding</keyword>
<keyword id="KW-0547">Nucleotide-binding</keyword>
<keyword id="KW-0658">Purine biosynthesis</keyword>
<sequence length="391" mass="42804">MTFADRLPRRLMLLGSGELGKEFAIAAQRLGNTVIAVDRYAHAPAMQVADASAVISMLDGEALEAVVQEFQPDLIIPEIEAIRTEKLQEFEDRGLTVIPTARATHFTMNRDRIRDLAAQQLGLRTARYAYASCFEELQTVAAAIGYPNVIKPVMSSSGKGQSIIQQPDQLQAAWDYAIAGSRGDSQKVILEEFIPFELEITLLTIRQWQGPTLFCPPIGHRQERGDYQESWQPAPLRPDLLAQAQAIAAQVTEALGGAGLFGVEFFVTPDEVIFSELSPRPHDTGMVTLISQNLNEFELHLRAVLGLPIPAIELLGPSASRVILAEDSGDRPSYAGVAAALQEPWVDLRLFGKPDMRPQRRMGVALARDESVEAARAKADRAASQVTIQPS</sequence>
<reference key="1">
    <citation type="journal article" date="2007" name="Photosyn. Res.">
        <title>Complete nucleotide sequence of the freshwater unicellular cyanobacterium Synechococcus elongatus PCC 6301 chromosome: gene content and organization.</title>
        <authorList>
            <person name="Sugita C."/>
            <person name="Ogata K."/>
            <person name="Shikata M."/>
            <person name="Jikuya H."/>
            <person name="Takano J."/>
            <person name="Furumichi M."/>
            <person name="Kanehisa M."/>
            <person name="Omata T."/>
            <person name="Sugiura M."/>
            <person name="Sugita M."/>
        </authorList>
    </citation>
    <scope>NUCLEOTIDE SEQUENCE [LARGE SCALE GENOMIC DNA]</scope>
    <source>
        <strain>ATCC 27144 / PCC 6301 / SAUG 1402/1</strain>
    </source>
</reference>
<gene>
    <name evidence="1" type="primary">purT</name>
    <name type="ordered locus">syc0935_d</name>
</gene>
<organism>
    <name type="scientific">Synechococcus sp. (strain ATCC 27144 / PCC 6301 / SAUG 1402/1)</name>
    <name type="common">Anacystis nidulans</name>
    <dbReference type="NCBI Taxonomy" id="269084"/>
    <lineage>
        <taxon>Bacteria</taxon>
        <taxon>Bacillati</taxon>
        <taxon>Cyanobacteriota</taxon>
        <taxon>Cyanophyceae</taxon>
        <taxon>Synechococcales</taxon>
        <taxon>Synechococcaceae</taxon>
        <taxon>Synechococcus</taxon>
    </lineage>
</organism>
<accession>Q5N3J5</accession>